<feature type="chain" id="PRO_0000234601" description="Zinc finger protein 619">
    <location>
        <begin position="1"/>
        <end position="560"/>
    </location>
</feature>
<feature type="zinc finger region" description="C2H2-type 1" evidence="1">
    <location>
        <begin position="188"/>
        <end position="210"/>
    </location>
</feature>
<feature type="zinc finger region" description="C2H2-type 2" evidence="1">
    <location>
        <begin position="216"/>
        <end position="238"/>
    </location>
</feature>
<feature type="zinc finger region" description="C2H2-type 3" evidence="1">
    <location>
        <begin position="244"/>
        <end position="266"/>
    </location>
</feature>
<feature type="zinc finger region" description="C2H2-type 4" evidence="1">
    <location>
        <begin position="272"/>
        <end position="294"/>
    </location>
</feature>
<feature type="zinc finger region" description="C2H2-type 5" evidence="1">
    <location>
        <begin position="300"/>
        <end position="322"/>
    </location>
</feature>
<feature type="zinc finger region" description="C2H2-type 6" evidence="1">
    <location>
        <begin position="328"/>
        <end position="350"/>
    </location>
</feature>
<feature type="zinc finger region" description="C2H2-type 7" evidence="1">
    <location>
        <begin position="356"/>
        <end position="378"/>
    </location>
</feature>
<feature type="zinc finger region" description="C2H2-type 8" evidence="1">
    <location>
        <begin position="384"/>
        <end position="406"/>
    </location>
</feature>
<feature type="zinc finger region" description="C2H2-type 9" evidence="1">
    <location>
        <begin position="412"/>
        <end position="434"/>
    </location>
</feature>
<feature type="zinc finger region" description="C2H2-type 10" evidence="1">
    <location>
        <begin position="440"/>
        <end position="462"/>
    </location>
</feature>
<feature type="splice variant" id="VSP_043080" description="In isoform 2." evidence="2">
    <original>MGQPAPYAEGPIQGGDAGELCKCDFLVSISIPQTRSDIPAGARRSSMGPRSLDTCWGRGPERHVHRLECNGVIFTHRNLCLP</original>
    <variation>MKPGVISHAPDSVVPAAFPFPKPDLIFQLEQGEAAWGPDPWTLAGGEALRGMCT</variation>
    <location>
        <begin position="1"/>
        <end position="82"/>
    </location>
</feature>
<feature type="splice variant" id="VSP_055715" description="In isoform 3." evidence="3">
    <original>MGQPAPYAEGPIQGGDAGELCKCDFLVSISIPQTRSDIPAGARRSSMGPRSLDTCWGRGPERHVHRLECNGVIFTHRNLCLP</original>
    <variation>MLQTVWFQGLGRNLLFQEPVTFEDVAVYFTQNEWASLHPTQRALYREVMLENYANVTSLSAFPFPKPDLIFQLEQGEAAWGPDPWTLAGGEALRGMCT</variation>
    <location>
        <begin position="1"/>
        <end position="82"/>
    </location>
</feature>
<feature type="splice variant" id="VSP_055716" description="In isoform 4." evidence="3">
    <original>MGQPAPYAEGPIQGGDAGELCKCDFLVSISIPQTRSDIPAGARRSSMGPRSLDTCWGRGPERHVHRLECNGVIFTHRNLCLP</original>
    <variation>MLQTVWFQGLGRNLLFQEPVTFEDVAVYFTQNEWASLHPTQRALYREVMLENYANVTSLYPTAGGFPLDTERTEKVPGALSSFLPSSSSLELILALLPMSAFPFPKPDLIFQLEQGEAAWGPDPWTLAGGEALRGMCT</variation>
    <location>
        <begin position="1"/>
        <end position="82"/>
    </location>
</feature>
<accession>Q8N2I2</accession>
<accession>B4E271</accession>
<accession>C9JRN5</accession>
<accession>D4PHA2</accession>
<accession>E9PCD9</accession>
<evidence type="ECO:0000255" key="1">
    <source>
        <dbReference type="PROSITE-ProRule" id="PRU00042"/>
    </source>
</evidence>
<evidence type="ECO:0000303" key="2">
    <source>
    </source>
</evidence>
<evidence type="ECO:0000305" key="3"/>
<name>ZN619_HUMAN</name>
<comment type="function">
    <text>May be involved in transcriptional regulation.</text>
</comment>
<comment type="subcellular location">
    <subcellularLocation>
        <location evidence="3">Nucleus</location>
    </subcellularLocation>
</comment>
<comment type="alternative products">
    <event type="alternative splicing"/>
    <isoform>
        <id>Q8N2I2-1</id>
        <name>1</name>
        <sequence type="displayed"/>
    </isoform>
    <isoform>
        <id>Q8N2I2-2</id>
        <name>2</name>
        <sequence type="described" ref="VSP_043080"/>
    </isoform>
    <isoform>
        <id>Q8N2I2-3</id>
        <name>3</name>
        <sequence type="described" ref="VSP_055715"/>
    </isoform>
    <isoform>
        <id>Q8N2I2-4</id>
        <name>4</name>
        <sequence type="described" ref="VSP_055716"/>
    </isoform>
</comment>
<comment type="similarity">
    <text evidence="3">Belongs to the krueppel C2H2-type zinc-finger protein family.</text>
</comment>
<dbReference type="EMBL" id="AK075245">
    <property type="protein sequence ID" value="BAC11495.1"/>
    <property type="molecule type" value="mRNA"/>
</dbReference>
<dbReference type="EMBL" id="AK304139">
    <property type="protein sequence ID" value="BAG65033.1"/>
    <property type="molecule type" value="mRNA"/>
</dbReference>
<dbReference type="EMBL" id="AC121754">
    <property type="status" value="NOT_ANNOTATED_CDS"/>
    <property type="molecule type" value="Genomic_DNA"/>
</dbReference>
<dbReference type="CCDS" id="CCDS46801.1">
    <molecule id="Q8N2I2-2"/>
</dbReference>
<dbReference type="CCDS" id="CCDS46802.1">
    <molecule id="Q8N2I2-4"/>
</dbReference>
<dbReference type="CCDS" id="CCDS46803.1">
    <molecule id="Q8N2I2-3"/>
</dbReference>
<dbReference type="RefSeq" id="NP_001138554.1">
    <molecule id="Q8N2I2-4"/>
    <property type="nucleotide sequence ID" value="NM_001145082.4"/>
</dbReference>
<dbReference type="RefSeq" id="NP_001138555.1">
    <molecule id="Q8N2I2-2"/>
    <property type="nucleotide sequence ID" value="NM_001145083.3"/>
</dbReference>
<dbReference type="RefSeq" id="NP_001138565.1">
    <molecule id="Q8N2I2-3"/>
    <property type="nucleotide sequence ID" value="NM_001145093.4"/>
</dbReference>
<dbReference type="RefSeq" id="NP_775927.1">
    <molecule id="Q8N2I2-1"/>
    <property type="nucleotide sequence ID" value="NM_173656.5"/>
</dbReference>
<dbReference type="SMR" id="Q8N2I2"/>
<dbReference type="BioGRID" id="130063">
    <property type="interactions" value="3"/>
</dbReference>
<dbReference type="IntAct" id="Q8N2I2">
    <property type="interactions" value="2"/>
</dbReference>
<dbReference type="STRING" id="9606.ENSP00000411132"/>
<dbReference type="iPTMnet" id="Q8N2I2"/>
<dbReference type="PhosphoSitePlus" id="Q8N2I2"/>
<dbReference type="BioMuta" id="ZNF619"/>
<dbReference type="DMDM" id="74762517"/>
<dbReference type="jPOST" id="Q8N2I2"/>
<dbReference type="MassIVE" id="Q8N2I2"/>
<dbReference type="PaxDb" id="9606-ENSP00000411132"/>
<dbReference type="PeptideAtlas" id="Q8N2I2"/>
<dbReference type="Antibodypedia" id="29047">
    <property type="antibodies" value="120 antibodies from 15 providers"/>
</dbReference>
<dbReference type="DNASU" id="285267"/>
<dbReference type="Ensembl" id="ENST00000314686.9">
    <molecule id="Q8N2I2-1"/>
    <property type="protein sequence ID" value="ENSP00000322529.5"/>
    <property type="gene ID" value="ENSG00000177873.14"/>
</dbReference>
<dbReference type="Ensembl" id="ENST00000432264.4">
    <molecule id="Q8N2I2-3"/>
    <property type="protein sequence ID" value="ENSP00000388710.2"/>
    <property type="gene ID" value="ENSG00000177873.14"/>
</dbReference>
<dbReference type="Ensembl" id="ENST00000447116.6">
    <molecule id="Q8N2I2-4"/>
    <property type="protein sequence ID" value="ENSP00000411132.2"/>
    <property type="gene ID" value="ENSG00000177873.14"/>
</dbReference>
<dbReference type="Ensembl" id="ENST00000456778.5">
    <molecule id="Q8N2I2-2"/>
    <property type="protein sequence ID" value="ENSP00000397232.1"/>
    <property type="gene ID" value="ENSG00000177873.14"/>
</dbReference>
<dbReference type="Ensembl" id="ENST00000521353.5">
    <molecule id="Q8N2I2-4"/>
    <property type="protein sequence ID" value="ENSP00000430705.1"/>
    <property type="gene ID" value="ENSG00000177873.14"/>
</dbReference>
<dbReference type="GeneID" id="285267"/>
<dbReference type="KEGG" id="hsa:285267"/>
<dbReference type="MANE-Select" id="ENST00000432264.4">
    <molecule id="Q8N2I2-3"/>
    <property type="protein sequence ID" value="ENSP00000388710.2"/>
    <property type="RefSeq nucleotide sequence ID" value="NM_001145093.4"/>
    <property type="RefSeq protein sequence ID" value="NP_001138565.1"/>
</dbReference>
<dbReference type="UCSC" id="uc003ckj.4">
    <molecule id="Q8N2I2-1"/>
    <property type="organism name" value="human"/>
</dbReference>
<dbReference type="AGR" id="HGNC:26910"/>
<dbReference type="CTD" id="285267"/>
<dbReference type="GeneCards" id="ZNF619"/>
<dbReference type="HGNC" id="HGNC:26910">
    <property type="gene designation" value="ZNF619"/>
</dbReference>
<dbReference type="HPA" id="ENSG00000177873">
    <property type="expression patterns" value="Low tissue specificity"/>
</dbReference>
<dbReference type="neXtProt" id="NX_Q8N2I2"/>
<dbReference type="OpenTargets" id="ENSG00000177873"/>
<dbReference type="PharmGKB" id="PA134889198"/>
<dbReference type="VEuPathDB" id="HostDB:ENSG00000177873"/>
<dbReference type="eggNOG" id="KOG1721">
    <property type="taxonomic scope" value="Eukaryota"/>
</dbReference>
<dbReference type="GeneTree" id="ENSGT00940000163750"/>
<dbReference type="HOGENOM" id="CLU_002678_44_5_1"/>
<dbReference type="InParanoid" id="Q8N2I2"/>
<dbReference type="OMA" id="RIHMDKK"/>
<dbReference type="OrthoDB" id="427030at2759"/>
<dbReference type="PAN-GO" id="Q8N2I2">
    <property type="GO annotations" value="3 GO annotations based on evolutionary models"/>
</dbReference>
<dbReference type="PhylomeDB" id="Q8N2I2"/>
<dbReference type="TreeFam" id="TF350844"/>
<dbReference type="PathwayCommons" id="Q8N2I2"/>
<dbReference type="Reactome" id="R-HSA-212436">
    <property type="pathway name" value="Generic Transcription Pathway"/>
</dbReference>
<dbReference type="SignaLink" id="Q8N2I2"/>
<dbReference type="BioGRID-ORCS" id="285267">
    <property type="hits" value="9 hits in 1182 CRISPR screens"/>
</dbReference>
<dbReference type="ChiTaRS" id="ZNF619">
    <property type="organism name" value="human"/>
</dbReference>
<dbReference type="GenomeRNAi" id="285267"/>
<dbReference type="Pharos" id="Q8N2I2">
    <property type="development level" value="Tdark"/>
</dbReference>
<dbReference type="PRO" id="PR:Q8N2I2"/>
<dbReference type="Proteomes" id="UP000005640">
    <property type="component" value="Chromosome 3"/>
</dbReference>
<dbReference type="RNAct" id="Q8N2I2">
    <property type="molecule type" value="protein"/>
</dbReference>
<dbReference type="Bgee" id="ENSG00000177873">
    <property type="expression patterns" value="Expressed in calcaneal tendon and 98 other cell types or tissues"/>
</dbReference>
<dbReference type="ExpressionAtlas" id="Q8N2I2">
    <property type="expression patterns" value="baseline and differential"/>
</dbReference>
<dbReference type="GO" id="GO:0005634">
    <property type="term" value="C:nucleus"/>
    <property type="evidence" value="ECO:0000318"/>
    <property type="project" value="GO_Central"/>
</dbReference>
<dbReference type="GO" id="GO:0000981">
    <property type="term" value="F:DNA-binding transcription factor activity, RNA polymerase II-specific"/>
    <property type="evidence" value="ECO:0000318"/>
    <property type="project" value="GO_Central"/>
</dbReference>
<dbReference type="GO" id="GO:0000977">
    <property type="term" value="F:RNA polymerase II transcription regulatory region sequence-specific DNA binding"/>
    <property type="evidence" value="ECO:0000318"/>
    <property type="project" value="GO_Central"/>
</dbReference>
<dbReference type="GO" id="GO:0008270">
    <property type="term" value="F:zinc ion binding"/>
    <property type="evidence" value="ECO:0007669"/>
    <property type="project" value="UniProtKB-KW"/>
</dbReference>
<dbReference type="GO" id="GO:0006357">
    <property type="term" value="P:regulation of transcription by RNA polymerase II"/>
    <property type="evidence" value="ECO:0000318"/>
    <property type="project" value="GO_Central"/>
</dbReference>
<dbReference type="FunFam" id="3.30.160.60:FF:000040">
    <property type="entry name" value="RB associated KRAB zinc finger"/>
    <property type="match status" value="1"/>
</dbReference>
<dbReference type="FunFam" id="3.30.160.60:FF:000822">
    <property type="entry name" value="Zinc finger protein 234, isoform CRA_a"/>
    <property type="match status" value="1"/>
</dbReference>
<dbReference type="FunFam" id="3.30.160.60:FF:000127">
    <property type="entry name" value="Zinc finger protein 354C"/>
    <property type="match status" value="1"/>
</dbReference>
<dbReference type="FunFam" id="3.30.160.60:FF:002090">
    <property type="entry name" value="Zinc finger protein 473"/>
    <property type="match status" value="1"/>
</dbReference>
<dbReference type="FunFam" id="3.30.160.60:FF:002254">
    <property type="entry name" value="Zinc finger protein 540"/>
    <property type="match status" value="1"/>
</dbReference>
<dbReference type="FunFam" id="3.30.160.60:FF:000737">
    <property type="entry name" value="Zinc finger protein 565"/>
    <property type="match status" value="1"/>
</dbReference>
<dbReference type="FunFam" id="3.30.160.60:FF:000149">
    <property type="entry name" value="Zinc finger protein 569"/>
    <property type="match status" value="1"/>
</dbReference>
<dbReference type="FunFam" id="3.30.160.60:FF:001787">
    <property type="entry name" value="Zinc finger protein 619"/>
    <property type="match status" value="1"/>
</dbReference>
<dbReference type="FunFam" id="3.30.160.60:FF:002087">
    <property type="entry name" value="Zinc finger protein 619"/>
    <property type="match status" value="1"/>
</dbReference>
<dbReference type="FunFam" id="3.30.160.60:FF:000047">
    <property type="entry name" value="zinc finger protein OZF"/>
    <property type="match status" value="1"/>
</dbReference>
<dbReference type="Gene3D" id="3.30.160.60">
    <property type="entry name" value="Classic Zinc Finger"/>
    <property type="match status" value="10"/>
</dbReference>
<dbReference type="InterPro" id="IPR036236">
    <property type="entry name" value="Znf_C2H2_sf"/>
</dbReference>
<dbReference type="InterPro" id="IPR013087">
    <property type="entry name" value="Znf_C2H2_type"/>
</dbReference>
<dbReference type="PANTHER" id="PTHR23235:SF178">
    <property type="entry name" value="C2H2-TYPE DOMAIN-CONTAINING PROTEIN-RELATED"/>
    <property type="match status" value="1"/>
</dbReference>
<dbReference type="PANTHER" id="PTHR23235">
    <property type="entry name" value="KRUEPPEL-LIKE TRANSCRIPTION FACTOR"/>
    <property type="match status" value="1"/>
</dbReference>
<dbReference type="Pfam" id="PF00096">
    <property type="entry name" value="zf-C2H2"/>
    <property type="match status" value="7"/>
</dbReference>
<dbReference type="SMART" id="SM00355">
    <property type="entry name" value="ZnF_C2H2"/>
    <property type="match status" value="10"/>
</dbReference>
<dbReference type="SUPFAM" id="SSF57667">
    <property type="entry name" value="beta-beta-alpha zinc fingers"/>
    <property type="match status" value="5"/>
</dbReference>
<dbReference type="PROSITE" id="PS00028">
    <property type="entry name" value="ZINC_FINGER_C2H2_1"/>
    <property type="match status" value="10"/>
</dbReference>
<dbReference type="PROSITE" id="PS50157">
    <property type="entry name" value="ZINC_FINGER_C2H2_2"/>
    <property type="match status" value="10"/>
</dbReference>
<sequence length="560" mass="63322">MGQPAPYAEGPIQGGDAGELCKCDFLVSISIPQTRSDIPAGARRSSMGPRSLDTCWGRGPERHVHRLECNGVIFTHRNLCLPGGKTKTENEEKTAQLNISKESESHRLIVEGLLMDVPQHPDFKDRLEKSQLHDTGNKTKIGDCTDLTVQDHESSTTEREEIARKLEESSVSTHLITKQGFAKEQVFYKCGECGSYYNPHSDFHLHQRVHTNEKPYTCKECGKTFRYNSKLSRHQKIHTGEKPYSCEECGQAFSQNSHLLQHQKLHGGQRPYECTDCGKTFSYNSKLIRHQRIHTGEKPFKCKECGKAFSCSYDCIIHERIHNGEKPYECKECGKSLSSNSVLIQHQRIHTGEKPYECKECGKAFHRSSVFLQHQRFHTGEQLYKCNECWKTFSCSSRFIVHQRIHNGEKPYECQECGKTFSQKITLVQHQRVHTGEKPYECKECGKAFRWNASFIQHQKWHTRKKLINGTGLSAVKPYCPCAILSPLPPQHTCSALAPPGPPLSSSHAVVLPPSVPFFLLLPSSEKANPSPVQIAHFFQDLAFPGKSSLQSPNPLSHSL</sequence>
<gene>
    <name type="primary">ZNF619</name>
</gene>
<protein>
    <recommendedName>
        <fullName>Zinc finger protein 619</fullName>
    </recommendedName>
</protein>
<proteinExistence type="evidence at protein level"/>
<organism>
    <name type="scientific">Homo sapiens</name>
    <name type="common">Human</name>
    <dbReference type="NCBI Taxonomy" id="9606"/>
    <lineage>
        <taxon>Eukaryota</taxon>
        <taxon>Metazoa</taxon>
        <taxon>Chordata</taxon>
        <taxon>Craniata</taxon>
        <taxon>Vertebrata</taxon>
        <taxon>Euteleostomi</taxon>
        <taxon>Mammalia</taxon>
        <taxon>Eutheria</taxon>
        <taxon>Euarchontoglires</taxon>
        <taxon>Primates</taxon>
        <taxon>Haplorrhini</taxon>
        <taxon>Catarrhini</taxon>
        <taxon>Hominidae</taxon>
        <taxon>Homo</taxon>
    </lineage>
</organism>
<keyword id="KW-0025">Alternative splicing</keyword>
<keyword id="KW-0238">DNA-binding</keyword>
<keyword id="KW-0479">Metal-binding</keyword>
<keyword id="KW-0539">Nucleus</keyword>
<keyword id="KW-1267">Proteomics identification</keyword>
<keyword id="KW-1185">Reference proteome</keyword>
<keyword id="KW-0677">Repeat</keyword>
<keyword id="KW-0804">Transcription</keyword>
<keyword id="KW-0805">Transcription regulation</keyword>
<keyword id="KW-0862">Zinc</keyword>
<keyword id="KW-0863">Zinc-finger</keyword>
<reference key="1">
    <citation type="journal article" date="2004" name="Nat. Genet.">
        <title>Complete sequencing and characterization of 21,243 full-length human cDNAs.</title>
        <authorList>
            <person name="Ota T."/>
            <person name="Suzuki Y."/>
            <person name="Nishikawa T."/>
            <person name="Otsuki T."/>
            <person name="Sugiyama T."/>
            <person name="Irie R."/>
            <person name="Wakamatsu A."/>
            <person name="Hayashi K."/>
            <person name="Sato H."/>
            <person name="Nagai K."/>
            <person name="Kimura K."/>
            <person name="Makita H."/>
            <person name="Sekine M."/>
            <person name="Obayashi M."/>
            <person name="Nishi T."/>
            <person name="Shibahara T."/>
            <person name="Tanaka T."/>
            <person name="Ishii S."/>
            <person name="Yamamoto J."/>
            <person name="Saito K."/>
            <person name="Kawai Y."/>
            <person name="Isono Y."/>
            <person name="Nakamura Y."/>
            <person name="Nagahari K."/>
            <person name="Murakami K."/>
            <person name="Yasuda T."/>
            <person name="Iwayanagi T."/>
            <person name="Wagatsuma M."/>
            <person name="Shiratori A."/>
            <person name="Sudo H."/>
            <person name="Hosoiri T."/>
            <person name="Kaku Y."/>
            <person name="Kodaira H."/>
            <person name="Kondo H."/>
            <person name="Sugawara M."/>
            <person name="Takahashi M."/>
            <person name="Kanda K."/>
            <person name="Yokoi T."/>
            <person name="Furuya T."/>
            <person name="Kikkawa E."/>
            <person name="Omura Y."/>
            <person name="Abe K."/>
            <person name="Kamihara K."/>
            <person name="Katsuta N."/>
            <person name="Sato K."/>
            <person name="Tanikawa M."/>
            <person name="Yamazaki M."/>
            <person name="Ninomiya K."/>
            <person name="Ishibashi T."/>
            <person name="Yamashita H."/>
            <person name="Murakawa K."/>
            <person name="Fujimori K."/>
            <person name="Tanai H."/>
            <person name="Kimata M."/>
            <person name="Watanabe M."/>
            <person name="Hiraoka S."/>
            <person name="Chiba Y."/>
            <person name="Ishida S."/>
            <person name="Ono Y."/>
            <person name="Takiguchi S."/>
            <person name="Watanabe S."/>
            <person name="Yosida M."/>
            <person name="Hotuta T."/>
            <person name="Kusano J."/>
            <person name="Kanehori K."/>
            <person name="Takahashi-Fujii A."/>
            <person name="Hara H."/>
            <person name="Tanase T.-O."/>
            <person name="Nomura Y."/>
            <person name="Togiya S."/>
            <person name="Komai F."/>
            <person name="Hara R."/>
            <person name="Takeuchi K."/>
            <person name="Arita M."/>
            <person name="Imose N."/>
            <person name="Musashino K."/>
            <person name="Yuuki H."/>
            <person name="Oshima A."/>
            <person name="Sasaki N."/>
            <person name="Aotsuka S."/>
            <person name="Yoshikawa Y."/>
            <person name="Matsunawa H."/>
            <person name="Ichihara T."/>
            <person name="Shiohata N."/>
            <person name="Sano S."/>
            <person name="Moriya S."/>
            <person name="Momiyama H."/>
            <person name="Satoh N."/>
            <person name="Takami S."/>
            <person name="Terashima Y."/>
            <person name="Suzuki O."/>
            <person name="Nakagawa S."/>
            <person name="Senoh A."/>
            <person name="Mizoguchi H."/>
            <person name="Goto Y."/>
            <person name="Shimizu F."/>
            <person name="Wakebe H."/>
            <person name="Hishigaki H."/>
            <person name="Watanabe T."/>
            <person name="Sugiyama A."/>
            <person name="Takemoto M."/>
            <person name="Kawakami B."/>
            <person name="Yamazaki M."/>
            <person name="Watanabe K."/>
            <person name="Kumagai A."/>
            <person name="Itakura S."/>
            <person name="Fukuzumi Y."/>
            <person name="Fujimori Y."/>
            <person name="Komiyama M."/>
            <person name="Tashiro H."/>
            <person name="Tanigami A."/>
            <person name="Fujiwara T."/>
            <person name="Ono T."/>
            <person name="Yamada K."/>
            <person name="Fujii Y."/>
            <person name="Ozaki K."/>
            <person name="Hirao M."/>
            <person name="Ohmori Y."/>
            <person name="Kawabata A."/>
            <person name="Hikiji T."/>
            <person name="Kobatake N."/>
            <person name="Inagaki H."/>
            <person name="Ikema Y."/>
            <person name="Okamoto S."/>
            <person name="Okitani R."/>
            <person name="Kawakami T."/>
            <person name="Noguchi S."/>
            <person name="Itoh T."/>
            <person name="Shigeta K."/>
            <person name="Senba T."/>
            <person name="Matsumura K."/>
            <person name="Nakajima Y."/>
            <person name="Mizuno T."/>
            <person name="Morinaga M."/>
            <person name="Sasaki M."/>
            <person name="Togashi T."/>
            <person name="Oyama M."/>
            <person name="Hata H."/>
            <person name="Watanabe M."/>
            <person name="Komatsu T."/>
            <person name="Mizushima-Sugano J."/>
            <person name="Satoh T."/>
            <person name="Shirai Y."/>
            <person name="Takahashi Y."/>
            <person name="Nakagawa K."/>
            <person name="Okumura K."/>
            <person name="Nagase T."/>
            <person name="Nomura N."/>
            <person name="Kikuchi H."/>
            <person name="Masuho Y."/>
            <person name="Yamashita R."/>
            <person name="Nakai K."/>
            <person name="Yada T."/>
            <person name="Nakamura Y."/>
            <person name="Ohara O."/>
            <person name="Isogai T."/>
            <person name="Sugano S."/>
        </authorList>
    </citation>
    <scope>NUCLEOTIDE SEQUENCE [LARGE SCALE MRNA] (ISOFORMS 1 AND 2)</scope>
    <source>
        <tissue>Thyroid</tissue>
        <tissue>Trachea</tissue>
    </source>
</reference>
<reference key="2">
    <citation type="journal article" date="2006" name="Nature">
        <title>The DNA sequence, annotation and analysis of human chromosome 3.</title>
        <authorList>
            <person name="Muzny D.M."/>
            <person name="Scherer S.E."/>
            <person name="Kaul R."/>
            <person name="Wang J."/>
            <person name="Yu J."/>
            <person name="Sudbrak R."/>
            <person name="Buhay C.J."/>
            <person name="Chen R."/>
            <person name="Cree A."/>
            <person name="Ding Y."/>
            <person name="Dugan-Rocha S."/>
            <person name="Gill R."/>
            <person name="Gunaratne P."/>
            <person name="Harris R.A."/>
            <person name="Hawes A.C."/>
            <person name="Hernandez J."/>
            <person name="Hodgson A.V."/>
            <person name="Hume J."/>
            <person name="Jackson A."/>
            <person name="Khan Z.M."/>
            <person name="Kovar-Smith C."/>
            <person name="Lewis L.R."/>
            <person name="Lozado R.J."/>
            <person name="Metzker M.L."/>
            <person name="Milosavljevic A."/>
            <person name="Miner G.R."/>
            <person name="Morgan M.B."/>
            <person name="Nazareth L.V."/>
            <person name="Scott G."/>
            <person name="Sodergren E."/>
            <person name="Song X.-Z."/>
            <person name="Steffen D."/>
            <person name="Wei S."/>
            <person name="Wheeler D.A."/>
            <person name="Wright M.W."/>
            <person name="Worley K.C."/>
            <person name="Yuan Y."/>
            <person name="Zhang Z."/>
            <person name="Adams C.Q."/>
            <person name="Ansari-Lari M.A."/>
            <person name="Ayele M."/>
            <person name="Brown M.J."/>
            <person name="Chen G."/>
            <person name="Chen Z."/>
            <person name="Clendenning J."/>
            <person name="Clerc-Blankenburg K.P."/>
            <person name="Chen R."/>
            <person name="Chen Z."/>
            <person name="Davis C."/>
            <person name="Delgado O."/>
            <person name="Dinh H.H."/>
            <person name="Dong W."/>
            <person name="Draper H."/>
            <person name="Ernst S."/>
            <person name="Fu G."/>
            <person name="Gonzalez-Garay M.L."/>
            <person name="Garcia D.K."/>
            <person name="Gillett W."/>
            <person name="Gu J."/>
            <person name="Hao B."/>
            <person name="Haugen E."/>
            <person name="Havlak P."/>
            <person name="He X."/>
            <person name="Hennig S."/>
            <person name="Hu S."/>
            <person name="Huang W."/>
            <person name="Jackson L.R."/>
            <person name="Jacob L.S."/>
            <person name="Kelly S.H."/>
            <person name="Kube M."/>
            <person name="Levy R."/>
            <person name="Li Z."/>
            <person name="Liu B."/>
            <person name="Liu J."/>
            <person name="Liu W."/>
            <person name="Lu J."/>
            <person name="Maheshwari M."/>
            <person name="Nguyen B.-V."/>
            <person name="Okwuonu G.O."/>
            <person name="Palmeiri A."/>
            <person name="Pasternak S."/>
            <person name="Perez L.M."/>
            <person name="Phelps K.A."/>
            <person name="Plopper F.J."/>
            <person name="Qiang B."/>
            <person name="Raymond C."/>
            <person name="Rodriguez R."/>
            <person name="Saenphimmachak C."/>
            <person name="Santibanez J."/>
            <person name="Shen H."/>
            <person name="Shen Y."/>
            <person name="Subramanian S."/>
            <person name="Tabor P.E."/>
            <person name="Verduzco D."/>
            <person name="Waldron L."/>
            <person name="Wang J."/>
            <person name="Wang J."/>
            <person name="Wang Q."/>
            <person name="Williams G.A."/>
            <person name="Wong G.K.-S."/>
            <person name="Yao Z."/>
            <person name="Zhang J."/>
            <person name="Zhang X."/>
            <person name="Zhao G."/>
            <person name="Zhou J."/>
            <person name="Zhou Y."/>
            <person name="Nelson D."/>
            <person name="Lehrach H."/>
            <person name="Reinhardt R."/>
            <person name="Naylor S.L."/>
            <person name="Yang H."/>
            <person name="Olson M."/>
            <person name="Weinstock G."/>
            <person name="Gibbs R.A."/>
        </authorList>
    </citation>
    <scope>NUCLEOTIDE SEQUENCE [LARGE SCALE GENOMIC DNA]</scope>
</reference>